<organism>
    <name type="scientific">Caulobacter vibrioides (strain ATCC 19089 / CIP 103742 / CB 15)</name>
    <name type="common">Caulobacter crescentus</name>
    <dbReference type="NCBI Taxonomy" id="190650"/>
    <lineage>
        <taxon>Bacteria</taxon>
        <taxon>Pseudomonadati</taxon>
        <taxon>Pseudomonadota</taxon>
        <taxon>Alphaproteobacteria</taxon>
        <taxon>Caulobacterales</taxon>
        <taxon>Caulobacteraceae</taxon>
        <taxon>Caulobacter</taxon>
    </lineage>
</organism>
<dbReference type="EMBL" id="AE005673">
    <property type="protein sequence ID" value="AAK23977.1"/>
    <property type="molecule type" value="Genomic_DNA"/>
</dbReference>
<dbReference type="PIR" id="E87497">
    <property type="entry name" value="E87497"/>
</dbReference>
<dbReference type="RefSeq" id="NP_420809.1">
    <property type="nucleotide sequence ID" value="NC_002696.2"/>
</dbReference>
<dbReference type="RefSeq" id="WP_010919868.1">
    <property type="nucleotide sequence ID" value="NC_002696.2"/>
</dbReference>
<dbReference type="STRING" id="190650.CC_2002"/>
<dbReference type="EnsemblBacteria" id="AAK23977">
    <property type="protein sequence ID" value="AAK23977"/>
    <property type="gene ID" value="CC_2002"/>
</dbReference>
<dbReference type="KEGG" id="ccr:CC_2002"/>
<dbReference type="PATRIC" id="fig|190650.5.peg.2021"/>
<dbReference type="eggNOG" id="COG1826">
    <property type="taxonomic scope" value="Bacteria"/>
</dbReference>
<dbReference type="HOGENOM" id="CLU_086034_1_3_5"/>
<dbReference type="BioCyc" id="CAULO:CC2002-MONOMER"/>
<dbReference type="Proteomes" id="UP000001816">
    <property type="component" value="Chromosome"/>
</dbReference>
<dbReference type="GO" id="GO:0033281">
    <property type="term" value="C:TAT protein transport complex"/>
    <property type="evidence" value="ECO:0007669"/>
    <property type="project" value="UniProtKB-UniRule"/>
</dbReference>
<dbReference type="GO" id="GO:0008320">
    <property type="term" value="F:protein transmembrane transporter activity"/>
    <property type="evidence" value="ECO:0007669"/>
    <property type="project" value="UniProtKB-UniRule"/>
</dbReference>
<dbReference type="GO" id="GO:0043953">
    <property type="term" value="P:protein transport by the Tat complex"/>
    <property type="evidence" value="ECO:0007669"/>
    <property type="project" value="UniProtKB-UniRule"/>
</dbReference>
<dbReference type="Gene3D" id="1.20.5.3310">
    <property type="match status" value="1"/>
</dbReference>
<dbReference type="HAMAP" id="MF_00237">
    <property type="entry name" value="TatB"/>
    <property type="match status" value="1"/>
</dbReference>
<dbReference type="InterPro" id="IPR003369">
    <property type="entry name" value="TatA/B/E"/>
</dbReference>
<dbReference type="InterPro" id="IPR018448">
    <property type="entry name" value="TatB"/>
</dbReference>
<dbReference type="NCBIfam" id="TIGR01410">
    <property type="entry name" value="tatB"/>
    <property type="match status" value="1"/>
</dbReference>
<dbReference type="Pfam" id="PF02416">
    <property type="entry name" value="TatA_B_E"/>
    <property type="match status" value="1"/>
</dbReference>
<dbReference type="PRINTS" id="PR01506">
    <property type="entry name" value="TATBPROTEIN"/>
</dbReference>
<name>TATB_CAUVC</name>
<sequence>MLPDIGGTELLIIAAVALIVVGPKDLPALLRKVGQFVGRMRGMASEFRASFDEMARQSELDELRREVQAMRSGQFTNPVQDAADAARDVQVDQVFADIDASLSSGAMQAHPYAAGETHNSILPTAEPSAEIVEAKPKRAPRKKAVAEPVAAEPVLVEPVKAPRKRASQKQEITVEAPKAVRAPRKRASKAGDSTASDIVS</sequence>
<protein>
    <recommendedName>
        <fullName evidence="1">Sec-independent protein translocase protein TatB</fullName>
    </recommendedName>
</protein>
<proteinExistence type="inferred from homology"/>
<accession>Q9A6T1</accession>
<feature type="chain" id="PRO_0000192650" description="Sec-independent protein translocase protein TatB">
    <location>
        <begin position="1"/>
        <end position="200"/>
    </location>
</feature>
<feature type="transmembrane region" description="Helical" evidence="1">
    <location>
        <begin position="2"/>
        <end position="22"/>
    </location>
</feature>
<feature type="region of interest" description="Disordered" evidence="2">
    <location>
        <begin position="160"/>
        <end position="200"/>
    </location>
</feature>
<feature type="compositionally biased region" description="Polar residues" evidence="2">
    <location>
        <begin position="191"/>
        <end position="200"/>
    </location>
</feature>
<reference key="1">
    <citation type="journal article" date="2001" name="Proc. Natl. Acad. Sci. U.S.A.">
        <title>Complete genome sequence of Caulobacter crescentus.</title>
        <authorList>
            <person name="Nierman W.C."/>
            <person name="Feldblyum T.V."/>
            <person name="Laub M.T."/>
            <person name="Paulsen I.T."/>
            <person name="Nelson K.E."/>
            <person name="Eisen J.A."/>
            <person name="Heidelberg J.F."/>
            <person name="Alley M.R.K."/>
            <person name="Ohta N."/>
            <person name="Maddock J.R."/>
            <person name="Potocka I."/>
            <person name="Nelson W.C."/>
            <person name="Newton A."/>
            <person name="Stephens C."/>
            <person name="Phadke N.D."/>
            <person name="Ely B."/>
            <person name="DeBoy R.T."/>
            <person name="Dodson R.J."/>
            <person name="Durkin A.S."/>
            <person name="Gwinn M.L."/>
            <person name="Haft D.H."/>
            <person name="Kolonay J.F."/>
            <person name="Smit J."/>
            <person name="Craven M.B."/>
            <person name="Khouri H.M."/>
            <person name="Shetty J."/>
            <person name="Berry K.J."/>
            <person name="Utterback T.R."/>
            <person name="Tran K."/>
            <person name="Wolf A.M."/>
            <person name="Vamathevan J.J."/>
            <person name="Ermolaeva M.D."/>
            <person name="White O."/>
            <person name="Salzberg S.L."/>
            <person name="Venter J.C."/>
            <person name="Shapiro L."/>
            <person name="Fraser C.M."/>
        </authorList>
    </citation>
    <scope>NUCLEOTIDE SEQUENCE [LARGE SCALE GENOMIC DNA]</scope>
    <source>
        <strain>ATCC 19089 / CIP 103742 / CB 15</strain>
    </source>
</reference>
<comment type="function">
    <text evidence="1">Part of the twin-arginine translocation (Tat) system that transports large folded proteins containing a characteristic twin-arginine motif in their signal peptide across membranes. Together with TatC, TatB is part of a receptor directly interacting with Tat signal peptides. TatB may form an oligomeric binding site that transiently accommodates folded Tat precursor proteins before their translocation.</text>
</comment>
<comment type="subunit">
    <text evidence="1">The Tat system comprises two distinct complexes: a TatABC complex, containing multiple copies of TatA, TatB and TatC subunits, and a separate TatA complex, containing only TatA subunits. Substrates initially bind to the TatABC complex, which probably triggers association of the separate TatA complex to form the active translocon.</text>
</comment>
<comment type="subcellular location">
    <subcellularLocation>
        <location evidence="1">Cell inner membrane</location>
        <topology evidence="1">Single-pass membrane protein</topology>
    </subcellularLocation>
</comment>
<comment type="similarity">
    <text evidence="1">Belongs to the TatB family.</text>
</comment>
<evidence type="ECO:0000255" key="1">
    <source>
        <dbReference type="HAMAP-Rule" id="MF_00237"/>
    </source>
</evidence>
<evidence type="ECO:0000256" key="2">
    <source>
        <dbReference type="SAM" id="MobiDB-lite"/>
    </source>
</evidence>
<gene>
    <name evidence="1" type="primary">tatB</name>
    <name type="ordered locus">CC_2002</name>
</gene>
<keyword id="KW-0997">Cell inner membrane</keyword>
<keyword id="KW-1003">Cell membrane</keyword>
<keyword id="KW-0472">Membrane</keyword>
<keyword id="KW-0653">Protein transport</keyword>
<keyword id="KW-1185">Reference proteome</keyword>
<keyword id="KW-0811">Translocation</keyword>
<keyword id="KW-0812">Transmembrane</keyword>
<keyword id="KW-1133">Transmembrane helix</keyword>
<keyword id="KW-0813">Transport</keyword>